<protein>
    <recommendedName>
        <fullName evidence="1">SsrA-binding protein</fullName>
    </recommendedName>
    <alternativeName>
        <fullName evidence="1">Small protein B</fullName>
    </alternativeName>
</protein>
<evidence type="ECO:0000255" key="1">
    <source>
        <dbReference type="HAMAP-Rule" id="MF_00023"/>
    </source>
</evidence>
<reference key="1">
    <citation type="journal article" date="2005" name="Nucleic Acids Res.">
        <title>Genome dynamics and diversity of Shigella species, the etiologic agents of bacillary dysentery.</title>
        <authorList>
            <person name="Yang F."/>
            <person name="Yang J."/>
            <person name="Zhang X."/>
            <person name="Chen L."/>
            <person name="Jiang Y."/>
            <person name="Yan Y."/>
            <person name="Tang X."/>
            <person name="Wang J."/>
            <person name="Xiong Z."/>
            <person name="Dong J."/>
            <person name="Xue Y."/>
            <person name="Zhu Y."/>
            <person name="Xu X."/>
            <person name="Sun L."/>
            <person name="Chen S."/>
            <person name="Nie H."/>
            <person name="Peng J."/>
            <person name="Xu J."/>
            <person name="Wang Y."/>
            <person name="Yuan Z."/>
            <person name="Wen Y."/>
            <person name="Yao Z."/>
            <person name="Shen Y."/>
            <person name="Qiang B."/>
            <person name="Hou Y."/>
            <person name="Yu J."/>
            <person name="Jin Q."/>
        </authorList>
    </citation>
    <scope>NUCLEOTIDE SEQUENCE [LARGE SCALE GENOMIC DNA]</scope>
    <source>
        <strain>Sd197</strain>
    </source>
</reference>
<proteinExistence type="inferred from homology"/>
<feature type="chain" id="PRO_1000002147" description="SsrA-binding protein">
    <location>
        <begin position="1"/>
        <end position="160"/>
    </location>
</feature>
<dbReference type="EMBL" id="CP000034">
    <property type="protein sequence ID" value="ABB62836.1"/>
    <property type="molecule type" value="Genomic_DNA"/>
</dbReference>
<dbReference type="RefSeq" id="WP_000162574.1">
    <property type="nucleotide sequence ID" value="NC_007606.1"/>
</dbReference>
<dbReference type="RefSeq" id="YP_404327.1">
    <property type="nucleotide sequence ID" value="NC_007606.1"/>
</dbReference>
<dbReference type="SMR" id="Q32CW9"/>
<dbReference type="STRING" id="300267.SDY_2793"/>
<dbReference type="EnsemblBacteria" id="ABB62836">
    <property type="protein sequence ID" value="ABB62836"/>
    <property type="gene ID" value="SDY_2793"/>
</dbReference>
<dbReference type="GeneID" id="93774470"/>
<dbReference type="KEGG" id="sdy:SDY_2793"/>
<dbReference type="PATRIC" id="fig|300267.13.peg.3365"/>
<dbReference type="HOGENOM" id="CLU_108953_3_0_6"/>
<dbReference type="Proteomes" id="UP000002716">
    <property type="component" value="Chromosome"/>
</dbReference>
<dbReference type="GO" id="GO:0005829">
    <property type="term" value="C:cytosol"/>
    <property type="evidence" value="ECO:0007669"/>
    <property type="project" value="TreeGrafter"/>
</dbReference>
<dbReference type="GO" id="GO:0003723">
    <property type="term" value="F:RNA binding"/>
    <property type="evidence" value="ECO:0007669"/>
    <property type="project" value="UniProtKB-UniRule"/>
</dbReference>
<dbReference type="GO" id="GO:0070929">
    <property type="term" value="P:trans-translation"/>
    <property type="evidence" value="ECO:0007669"/>
    <property type="project" value="UniProtKB-UniRule"/>
</dbReference>
<dbReference type="CDD" id="cd09294">
    <property type="entry name" value="SmpB"/>
    <property type="match status" value="1"/>
</dbReference>
<dbReference type="FunFam" id="2.40.280.10:FF:000001">
    <property type="entry name" value="SsrA-binding protein"/>
    <property type="match status" value="1"/>
</dbReference>
<dbReference type="Gene3D" id="2.40.280.10">
    <property type="match status" value="1"/>
</dbReference>
<dbReference type="HAMAP" id="MF_00023">
    <property type="entry name" value="SmpB"/>
    <property type="match status" value="1"/>
</dbReference>
<dbReference type="InterPro" id="IPR023620">
    <property type="entry name" value="SmpB"/>
</dbReference>
<dbReference type="InterPro" id="IPR000037">
    <property type="entry name" value="SsrA-bd_prot"/>
</dbReference>
<dbReference type="InterPro" id="IPR020081">
    <property type="entry name" value="SsrA-bd_prot_CS"/>
</dbReference>
<dbReference type="NCBIfam" id="NF003843">
    <property type="entry name" value="PRK05422.1"/>
    <property type="match status" value="1"/>
</dbReference>
<dbReference type="NCBIfam" id="TIGR00086">
    <property type="entry name" value="smpB"/>
    <property type="match status" value="1"/>
</dbReference>
<dbReference type="PANTHER" id="PTHR30308:SF2">
    <property type="entry name" value="SSRA-BINDING PROTEIN"/>
    <property type="match status" value="1"/>
</dbReference>
<dbReference type="PANTHER" id="PTHR30308">
    <property type="entry name" value="TMRNA-BINDING COMPONENT OF TRANS-TRANSLATION TAGGING COMPLEX"/>
    <property type="match status" value="1"/>
</dbReference>
<dbReference type="Pfam" id="PF01668">
    <property type="entry name" value="SmpB"/>
    <property type="match status" value="1"/>
</dbReference>
<dbReference type="SUPFAM" id="SSF74982">
    <property type="entry name" value="Small protein B (SmpB)"/>
    <property type="match status" value="1"/>
</dbReference>
<dbReference type="PROSITE" id="PS01317">
    <property type="entry name" value="SSRP"/>
    <property type="match status" value="1"/>
</dbReference>
<gene>
    <name evidence="1" type="primary">smpB</name>
    <name type="ordered locus">SDY_2793</name>
</gene>
<accession>Q32CW9</accession>
<comment type="function">
    <text evidence="1">Required for rescue of stalled ribosomes mediated by trans-translation. Binds to transfer-messenger RNA (tmRNA), required for stable association of tmRNA with ribosomes. tmRNA and SmpB together mimic tRNA shape, replacing the anticodon stem-loop with SmpB. tmRNA is encoded by the ssrA gene; the 2 termini fold to resemble tRNA(Ala) and it encodes a 'tag peptide', a short internal open reading frame. During trans-translation Ala-aminoacylated tmRNA acts like a tRNA, entering the A-site of stalled ribosomes, displacing the stalled mRNA. The ribosome then switches to translate the ORF on the tmRNA; the nascent peptide is terminated with the 'tag peptide' encoded by the tmRNA and targeted for degradation. The ribosome is freed to recommence translation, which seems to be the essential function of trans-translation.</text>
</comment>
<comment type="subcellular location">
    <subcellularLocation>
        <location evidence="1">Cytoplasm</location>
    </subcellularLocation>
    <text evidence="1">The tmRNA-SmpB complex associates with stalled 70S ribosomes.</text>
</comment>
<comment type="similarity">
    <text evidence="1">Belongs to the SmpB family.</text>
</comment>
<organism>
    <name type="scientific">Shigella dysenteriae serotype 1 (strain Sd197)</name>
    <dbReference type="NCBI Taxonomy" id="300267"/>
    <lineage>
        <taxon>Bacteria</taxon>
        <taxon>Pseudomonadati</taxon>
        <taxon>Pseudomonadota</taxon>
        <taxon>Gammaproteobacteria</taxon>
        <taxon>Enterobacterales</taxon>
        <taxon>Enterobacteriaceae</taxon>
        <taxon>Shigella</taxon>
    </lineage>
</organism>
<name>SSRP_SHIDS</name>
<sequence>MTKKKAHKPGSATIALNKRARHEYFIEEEFEAGLALQGWEVKSLRAGKANISDSYVLLRDGEAFLFGANITPMAVASTHVVCDPTRTRKLLLNQRELDSLYGRVNREGYTVVALSLYWKNAWCKVKIGVAKGKKQHDKRSDIKEREWQVDKARIMKNAHR</sequence>
<keyword id="KW-0963">Cytoplasm</keyword>
<keyword id="KW-1185">Reference proteome</keyword>
<keyword id="KW-0694">RNA-binding</keyword>